<dbReference type="EMBL" id="AK030032">
    <property type="protein sequence ID" value="BAC26750.1"/>
    <property type="status" value="ALT_INIT"/>
    <property type="molecule type" value="mRNA"/>
</dbReference>
<dbReference type="EMBL" id="AK051625">
    <property type="protein sequence ID" value="BAC34694.1"/>
    <property type="status" value="ALT_FRAME"/>
    <property type="molecule type" value="mRNA"/>
</dbReference>
<dbReference type="EMBL" id="AK081378">
    <property type="protein sequence ID" value="BAC38206.1"/>
    <property type="status" value="ALT_INIT"/>
    <property type="molecule type" value="mRNA"/>
</dbReference>
<dbReference type="EMBL" id="AL672248">
    <property type="status" value="NOT_ANNOTATED_CDS"/>
    <property type="molecule type" value="Genomic_DNA"/>
</dbReference>
<dbReference type="EMBL" id="CH466564">
    <property type="protein sequence ID" value="EDL14072.1"/>
    <property type="status" value="ALT_SEQ"/>
    <property type="molecule type" value="Genomic_DNA"/>
</dbReference>
<dbReference type="EMBL" id="BC059039">
    <property type="protein sequence ID" value="AAH59039.1"/>
    <property type="molecule type" value="mRNA"/>
</dbReference>
<dbReference type="EMBL" id="AF319978">
    <property type="protein sequence ID" value="AAK01206.1"/>
    <property type="molecule type" value="mRNA"/>
</dbReference>
<dbReference type="CCDS" id="CCDS41094.1"/>
<dbReference type="RefSeq" id="NP_444431.3">
    <property type="nucleotide sequence ID" value="NM_053201.4"/>
</dbReference>
<dbReference type="SMR" id="Q6PCZ4"/>
<dbReference type="BioGRID" id="223366">
    <property type="interactions" value="2"/>
</dbReference>
<dbReference type="FunCoup" id="Q6PCZ4">
    <property type="interactions" value="8"/>
</dbReference>
<dbReference type="IntAct" id="Q6PCZ4">
    <property type="interactions" value="1"/>
</dbReference>
<dbReference type="STRING" id="10090.ENSMUSP00000094078"/>
<dbReference type="GlyGen" id="Q6PCZ4">
    <property type="glycosylation" value="3 sites, 1 O-linked glycan (1 site)"/>
</dbReference>
<dbReference type="iPTMnet" id="Q6PCZ4"/>
<dbReference type="PhosphoSitePlus" id="Q6PCZ4"/>
<dbReference type="PaxDb" id="10090-ENSMUSP00000094078"/>
<dbReference type="ProteomicsDB" id="287297"/>
<dbReference type="Pumba" id="Q6PCZ4"/>
<dbReference type="Antibodypedia" id="560">
    <property type="antibodies" value="63 antibodies from 20 providers"/>
</dbReference>
<dbReference type="DNASU" id="107528"/>
<dbReference type="Ensembl" id="ENSMUST00000033578.7">
    <property type="protein sequence ID" value="ENSMUSP00000094078.2"/>
    <property type="gene ID" value="ENSMUSG00000031227.9"/>
</dbReference>
<dbReference type="GeneID" id="107528"/>
<dbReference type="KEGG" id="mmu:107528"/>
<dbReference type="UCSC" id="uc009uav.1">
    <property type="organism name" value="mouse"/>
</dbReference>
<dbReference type="AGR" id="MGI:2148149"/>
<dbReference type="CTD" id="57692"/>
<dbReference type="MGI" id="MGI:2148149">
    <property type="gene designation" value="Magee1"/>
</dbReference>
<dbReference type="VEuPathDB" id="HostDB:ENSMUSG00000031227"/>
<dbReference type="eggNOG" id="KOG4562">
    <property type="taxonomic scope" value="Eukaryota"/>
</dbReference>
<dbReference type="GeneTree" id="ENSGT00940000163182"/>
<dbReference type="HOGENOM" id="CLU_012911_0_0_1"/>
<dbReference type="InParanoid" id="Q6PCZ4"/>
<dbReference type="OMA" id="CTPVEYE"/>
<dbReference type="OrthoDB" id="205198at2759"/>
<dbReference type="PhylomeDB" id="Q6PCZ4"/>
<dbReference type="TreeFam" id="TF328505"/>
<dbReference type="BioGRID-ORCS" id="107528">
    <property type="hits" value="1 hit in 76 CRISPR screens"/>
</dbReference>
<dbReference type="ChiTaRS" id="Magee1">
    <property type="organism name" value="mouse"/>
</dbReference>
<dbReference type="PRO" id="PR:Q6PCZ4"/>
<dbReference type="Proteomes" id="UP000000589">
    <property type="component" value="Chromosome X"/>
</dbReference>
<dbReference type="RNAct" id="Q6PCZ4">
    <property type="molecule type" value="protein"/>
</dbReference>
<dbReference type="Bgee" id="ENSMUSG00000031227">
    <property type="expression patterns" value="Expressed in dorsomedial nucleus of hypothalamus and 187 other cell types or tissues"/>
</dbReference>
<dbReference type="GO" id="GO:0030425">
    <property type="term" value="C:dendrite"/>
    <property type="evidence" value="ECO:0000314"/>
    <property type="project" value="UniProtKB"/>
</dbReference>
<dbReference type="GO" id="GO:0005634">
    <property type="term" value="C:nucleus"/>
    <property type="evidence" value="ECO:0000314"/>
    <property type="project" value="UniProtKB"/>
</dbReference>
<dbReference type="GO" id="GO:0048471">
    <property type="term" value="C:perinuclear region of cytoplasm"/>
    <property type="evidence" value="ECO:0000314"/>
    <property type="project" value="UniProtKB"/>
</dbReference>
<dbReference type="GO" id="GO:0005886">
    <property type="term" value="C:plasma membrane"/>
    <property type="evidence" value="ECO:0000314"/>
    <property type="project" value="UniProtKB"/>
</dbReference>
<dbReference type="GO" id="GO:0045211">
    <property type="term" value="C:postsynaptic membrane"/>
    <property type="evidence" value="ECO:0000314"/>
    <property type="project" value="UniProtKB"/>
</dbReference>
<dbReference type="FunFam" id="1.10.10.1210:FF:000001">
    <property type="entry name" value="melanoma-associated antigen D1"/>
    <property type="match status" value="1"/>
</dbReference>
<dbReference type="FunFam" id="1.10.10.1210:FF:000002">
    <property type="entry name" value="melanoma-associated antigen E1"/>
    <property type="match status" value="1"/>
</dbReference>
<dbReference type="Gene3D" id="1.10.10.1200">
    <property type="entry name" value="MAGE homology domain, winged helix WH1 motif"/>
    <property type="match status" value="2"/>
</dbReference>
<dbReference type="Gene3D" id="1.10.10.1210">
    <property type="entry name" value="MAGE homology domain, winged helix WH2 motif"/>
    <property type="match status" value="2"/>
</dbReference>
<dbReference type="InterPro" id="IPR037445">
    <property type="entry name" value="MAGE"/>
</dbReference>
<dbReference type="InterPro" id="IPR041898">
    <property type="entry name" value="MAGE_WH1"/>
</dbReference>
<dbReference type="InterPro" id="IPR041899">
    <property type="entry name" value="MAGE_WH2"/>
</dbReference>
<dbReference type="InterPro" id="IPR002190">
    <property type="entry name" value="MHD_dom"/>
</dbReference>
<dbReference type="PANTHER" id="PTHR11736:SF9">
    <property type="entry name" value="MELANOMA-ASSOCIATED ANTIGEN E1"/>
    <property type="match status" value="1"/>
</dbReference>
<dbReference type="PANTHER" id="PTHR11736">
    <property type="entry name" value="MELANOMA-ASSOCIATED ANTIGEN MAGE ANTIGEN"/>
    <property type="match status" value="1"/>
</dbReference>
<dbReference type="Pfam" id="PF01454">
    <property type="entry name" value="MAGE"/>
    <property type="match status" value="2"/>
</dbReference>
<dbReference type="SMART" id="SM01373">
    <property type="entry name" value="MAGE"/>
    <property type="match status" value="2"/>
</dbReference>
<dbReference type="PROSITE" id="PS50838">
    <property type="entry name" value="MAGE"/>
    <property type="match status" value="2"/>
</dbReference>
<organism>
    <name type="scientific">Mus musculus</name>
    <name type="common">Mouse</name>
    <dbReference type="NCBI Taxonomy" id="10090"/>
    <lineage>
        <taxon>Eukaryota</taxon>
        <taxon>Metazoa</taxon>
        <taxon>Chordata</taxon>
        <taxon>Craniata</taxon>
        <taxon>Vertebrata</taxon>
        <taxon>Euteleostomi</taxon>
        <taxon>Mammalia</taxon>
        <taxon>Eutheria</taxon>
        <taxon>Euarchontoglires</taxon>
        <taxon>Glires</taxon>
        <taxon>Rodentia</taxon>
        <taxon>Myomorpha</taxon>
        <taxon>Muroidea</taxon>
        <taxon>Muridae</taxon>
        <taxon>Murinae</taxon>
        <taxon>Mus</taxon>
        <taxon>Mus</taxon>
    </lineage>
</organism>
<keyword id="KW-1003">Cell membrane</keyword>
<keyword id="KW-0963">Cytoplasm</keyword>
<keyword id="KW-0472">Membrane</keyword>
<keyword id="KW-0539">Nucleus</keyword>
<keyword id="KW-1185">Reference proteome</keyword>
<keyword id="KW-0677">Repeat</keyword>
<keyword id="KW-0825">Tumor antigen</keyword>
<keyword id="KW-0833">Ubl conjugation pathway</keyword>
<name>MAGE1_MOUSE</name>
<sequence length="918" mass="101632">MSLVSQNSRRRRGGRANARRNNGKGHPAAVPGPDVPRDRNDPKILQGLRASEGPGTSMLPTPREGPSASVPPTASEGSSAPRQFIISQGPNTSEMPTSRKGRGASRPPAVSAGLNTAMSITASEGPNSPVPPTAPKGSKAYEHLPVSEGLAISEQRHSDGGPNMEPTLGEGPGISVPPTFSEESGISDEGLSIFMSPNISEGPGINEPYSVSEDPSTSVPPTDSNGLGINLPPTFGEGLSISMLFSALEEPDIFAPPPSAEGLFASMSPPSGEIQSSWVSPIIMEGCNVNVPPTSKKGLRTSVPSAACESPSTSAEGLSSSLSSISAEGFCSSLAPCAAEGSCELLPCGEGRSTSELHCLGEGSSTSQMSLAAEGPSASGMPTEANNPEEALSCCASERRNKSTSRALQKAKDPSVRPKREDRFLDFQVLRDSKNSNSITIMGLGTSRVALTLKPQDPMEQNVAELLQFLLLKDQTKYPIKESDMREFIDKDYRHQFPEILRRAAVHLECIFRFELKELDTEEHIYILLNKLGPVPFEGLEDVPNGPKMGLLMMILGHILLNGNQAREADIWEMLWRFGVQRERRLSVFGNVKRLLSVEFVWQRYLDYRPLTDCVPVEYEFYWGPRSRAETTKMKILKFMAKIYNKDPMDWPALYNEALEEDADRVVVNNFRVARPFRRPLFAEVAPELDASGSKYSPHSWPESRLESKARKLVQLFLLMDSTKLPIPKKGILYYIGRECTKVFPDLLNRAARTLNHVYGTELVVLDPRNHSYTLYNRREMEDTEEIMDSPNRPGNNFLMQVLSFIFIMGNHARESAVWAFLRGLGVQNGRKHVITCRYLSQRYLDSLRVPDSDPVQYDFVWGPRARLETSKMKALRYVARIHRKEPEDWPEQYREAMEDEANRAEAGRRPLIVRNLR</sequence>
<accession>Q6PCZ4</accession>
<accession>Q8BG82</accession>
<accession>Q8BQ37</accession>
<accession>Q99PB2</accession>
<comment type="function">
    <text evidence="1">May enhance ubiquitin ligase activity of RING-type zinc finger-containing E3 ubiquitin-protein ligases. Proposed to act through recruitment and/or stabilization of the Ubl-conjugating enzyme (E2) at the E3:substrate complex (By similarity).</text>
</comment>
<comment type="subunit">
    <text evidence="1">Interacts with DTNA. Interacts with TRIM28 (By similarity).</text>
</comment>
<comment type="subcellular location">
    <subcellularLocation>
        <location evidence="4">Cytoplasm</location>
        <location evidence="4">Perinuclear region</location>
    </subcellularLocation>
    <subcellularLocation>
        <location evidence="4">Nucleus</location>
    </subcellularLocation>
    <subcellularLocation>
        <location evidence="4">Cell membrane</location>
    </subcellularLocation>
    <text>In the skeletal muscle, found at the postsynaptic membrane and is associated with a subset of myonuclei. May reside within nuclei and/or in perinuclear compartments. In peripheral nerves, colocalizes with DTNA in the Schwann cell membrane.</text>
</comment>
<comment type="tissue specificity">
    <text evidence="4">Expressed in cell bodies and dendrites of hippocampal and Purkinje neurons. Also expressed in peripheral nerve, where it localizes to the perineurium and myelin (at protein level). Predominantly expressed in brain and at low levels in the heart, liver, kidney, spleen, testis, lung, thymus, placenta and skeletal muscle.</text>
</comment>
<comment type="sequence caution" evidence="5">
    <conflict type="erroneous initiation">
        <sequence resource="EMBL-CDS" id="BAC26750"/>
    </conflict>
    <text>Truncated N-terminus.</text>
</comment>
<comment type="sequence caution" evidence="5">
    <conflict type="frameshift">
        <sequence resource="EMBL-CDS" id="BAC34694"/>
    </conflict>
</comment>
<comment type="sequence caution" evidence="5">
    <conflict type="erroneous initiation">
        <sequence resource="EMBL-CDS" id="BAC38206"/>
    </conflict>
    <text>Truncated N-terminus.</text>
</comment>
<comment type="sequence caution" evidence="5">
    <conflict type="erroneous gene model prediction">
        <sequence resource="EMBL-CDS" id="EDL14072"/>
    </conflict>
</comment>
<gene>
    <name type="primary">Magee1</name>
</gene>
<protein>
    <recommendedName>
        <fullName>Melanoma-associated antigen E1</fullName>
    </recommendedName>
    <alternativeName>
        <fullName>Alpha-dystrobrevin-associated MAGE Protein</fullName>
        <shortName>DAMAGE</shortName>
    </alternativeName>
    <alternativeName>
        <fullName>MAGE-E1 antigen</fullName>
    </alternativeName>
</protein>
<feature type="chain" id="PRO_0000404299" description="Melanoma-associated antigen E1">
    <location>
        <begin position="1"/>
        <end position="918"/>
    </location>
</feature>
<feature type="domain" description="MAGE 1" evidence="2">
    <location>
        <begin position="459"/>
        <end position="658"/>
    </location>
</feature>
<feature type="domain" description="MAGE 2" evidence="2">
    <location>
        <begin position="706"/>
        <end position="897"/>
    </location>
</feature>
<feature type="region of interest" description="Disordered" evidence="3">
    <location>
        <begin position="1"/>
        <end position="140"/>
    </location>
</feature>
<feature type="region of interest" description="Disordered" evidence="3">
    <location>
        <begin position="154"/>
        <end position="227"/>
    </location>
</feature>
<feature type="region of interest" description="Disordered" evidence="3">
    <location>
        <begin position="367"/>
        <end position="388"/>
    </location>
</feature>
<feature type="region of interest" description="Interaction with DTNA" evidence="4">
    <location>
        <begin position="704"/>
        <end position="918"/>
    </location>
</feature>
<feature type="compositionally biased region" description="Basic residues" evidence="3">
    <location>
        <begin position="8"/>
        <end position="23"/>
    </location>
</feature>
<feature type="compositionally biased region" description="Polar residues" evidence="3">
    <location>
        <begin position="70"/>
        <end position="96"/>
    </location>
</feature>
<feature type="compositionally biased region" description="Polar residues" evidence="3">
    <location>
        <begin position="113"/>
        <end position="126"/>
    </location>
</feature>
<feature type="compositionally biased region" description="Polar residues" evidence="3">
    <location>
        <begin position="213"/>
        <end position="227"/>
    </location>
</feature>
<feature type="sequence conflict" description="In Ref. 2; BAC34694." evidence="5" ref="2">
    <original>G</original>
    <variation>V</variation>
    <location>
        <position position="65"/>
    </location>
</feature>
<feature type="sequence conflict" description="In Ref. 2; BAC26750/BAC38206 and 4; EDL14072." evidence="5" ref="2 4">
    <original>M</original>
    <variation>V</variation>
    <location>
        <position position="164"/>
    </location>
</feature>
<feature type="sequence conflict" description="In Ref. 6; AAK01206." evidence="5" ref="6">
    <original>F</original>
    <variation>Y</variation>
    <location>
        <position position="497"/>
    </location>
</feature>
<feature type="sequence conflict" description="In Ref. 6; AAK01206." evidence="5" ref="6">
    <original>A</original>
    <variation>P</variation>
    <location>
        <position position="505"/>
    </location>
</feature>
<feature type="sequence conflict" description="In Ref. 6; AAK01206." evidence="5" ref="6">
    <original>R</original>
    <variation>K</variation>
    <location>
        <position position="584"/>
    </location>
</feature>
<feature type="sequence conflict" description="In Ref. 2; BAC34694." evidence="5" ref="2">
    <original>L</original>
    <variation>F</variation>
    <location>
        <position position="799"/>
    </location>
</feature>
<evidence type="ECO:0000250" key="1"/>
<evidence type="ECO:0000255" key="2">
    <source>
        <dbReference type="PROSITE-ProRule" id="PRU00127"/>
    </source>
</evidence>
<evidence type="ECO:0000256" key="3">
    <source>
        <dbReference type="SAM" id="MobiDB-lite"/>
    </source>
</evidence>
<evidence type="ECO:0000269" key="4">
    <source>
    </source>
</evidence>
<evidence type="ECO:0000305" key="5"/>
<proteinExistence type="evidence at protein level"/>
<reference key="1">
    <citation type="journal article" date="2004" name="J. Biol. Chem.">
        <title>DAMAGE, a novel alpha-dystrobrevin-associated MAGE protein in dystrophin complexes.</title>
        <authorList>
            <person name="Albrecht D.E."/>
            <person name="Froehner S.C."/>
        </authorList>
    </citation>
    <scope>NUCLEOTIDE SEQUENCE [MRNA]</scope>
    <scope>SUBCELLULAR LOCATION</scope>
    <scope>TISSUE SPECIFICITY</scope>
    <scope>INTERACTION WITH DTNA</scope>
</reference>
<reference key="2">
    <citation type="journal article" date="2005" name="Science">
        <title>The transcriptional landscape of the mammalian genome.</title>
        <authorList>
            <person name="Carninci P."/>
            <person name="Kasukawa T."/>
            <person name="Katayama S."/>
            <person name="Gough J."/>
            <person name="Frith M.C."/>
            <person name="Maeda N."/>
            <person name="Oyama R."/>
            <person name="Ravasi T."/>
            <person name="Lenhard B."/>
            <person name="Wells C."/>
            <person name="Kodzius R."/>
            <person name="Shimokawa K."/>
            <person name="Bajic V.B."/>
            <person name="Brenner S.E."/>
            <person name="Batalov S."/>
            <person name="Forrest A.R."/>
            <person name="Zavolan M."/>
            <person name="Davis M.J."/>
            <person name="Wilming L.G."/>
            <person name="Aidinis V."/>
            <person name="Allen J.E."/>
            <person name="Ambesi-Impiombato A."/>
            <person name="Apweiler R."/>
            <person name="Aturaliya R.N."/>
            <person name="Bailey T.L."/>
            <person name="Bansal M."/>
            <person name="Baxter L."/>
            <person name="Beisel K.W."/>
            <person name="Bersano T."/>
            <person name="Bono H."/>
            <person name="Chalk A.M."/>
            <person name="Chiu K.P."/>
            <person name="Choudhary V."/>
            <person name="Christoffels A."/>
            <person name="Clutterbuck D.R."/>
            <person name="Crowe M.L."/>
            <person name="Dalla E."/>
            <person name="Dalrymple B.P."/>
            <person name="de Bono B."/>
            <person name="Della Gatta G."/>
            <person name="di Bernardo D."/>
            <person name="Down T."/>
            <person name="Engstrom P."/>
            <person name="Fagiolini M."/>
            <person name="Faulkner G."/>
            <person name="Fletcher C.F."/>
            <person name="Fukushima T."/>
            <person name="Furuno M."/>
            <person name="Futaki S."/>
            <person name="Gariboldi M."/>
            <person name="Georgii-Hemming P."/>
            <person name="Gingeras T.R."/>
            <person name="Gojobori T."/>
            <person name="Green R.E."/>
            <person name="Gustincich S."/>
            <person name="Harbers M."/>
            <person name="Hayashi Y."/>
            <person name="Hensch T.K."/>
            <person name="Hirokawa N."/>
            <person name="Hill D."/>
            <person name="Huminiecki L."/>
            <person name="Iacono M."/>
            <person name="Ikeo K."/>
            <person name="Iwama A."/>
            <person name="Ishikawa T."/>
            <person name="Jakt M."/>
            <person name="Kanapin A."/>
            <person name="Katoh M."/>
            <person name="Kawasawa Y."/>
            <person name="Kelso J."/>
            <person name="Kitamura H."/>
            <person name="Kitano H."/>
            <person name="Kollias G."/>
            <person name="Krishnan S.P."/>
            <person name="Kruger A."/>
            <person name="Kummerfeld S.K."/>
            <person name="Kurochkin I.V."/>
            <person name="Lareau L.F."/>
            <person name="Lazarevic D."/>
            <person name="Lipovich L."/>
            <person name="Liu J."/>
            <person name="Liuni S."/>
            <person name="McWilliam S."/>
            <person name="Madan Babu M."/>
            <person name="Madera M."/>
            <person name="Marchionni L."/>
            <person name="Matsuda H."/>
            <person name="Matsuzawa S."/>
            <person name="Miki H."/>
            <person name="Mignone F."/>
            <person name="Miyake S."/>
            <person name="Morris K."/>
            <person name="Mottagui-Tabar S."/>
            <person name="Mulder N."/>
            <person name="Nakano N."/>
            <person name="Nakauchi H."/>
            <person name="Ng P."/>
            <person name="Nilsson R."/>
            <person name="Nishiguchi S."/>
            <person name="Nishikawa S."/>
            <person name="Nori F."/>
            <person name="Ohara O."/>
            <person name="Okazaki Y."/>
            <person name="Orlando V."/>
            <person name="Pang K.C."/>
            <person name="Pavan W.J."/>
            <person name="Pavesi G."/>
            <person name="Pesole G."/>
            <person name="Petrovsky N."/>
            <person name="Piazza S."/>
            <person name="Reed J."/>
            <person name="Reid J.F."/>
            <person name="Ring B.Z."/>
            <person name="Ringwald M."/>
            <person name="Rost B."/>
            <person name="Ruan Y."/>
            <person name="Salzberg S.L."/>
            <person name="Sandelin A."/>
            <person name="Schneider C."/>
            <person name="Schoenbach C."/>
            <person name="Sekiguchi K."/>
            <person name="Semple C.A."/>
            <person name="Seno S."/>
            <person name="Sessa L."/>
            <person name="Sheng Y."/>
            <person name="Shibata Y."/>
            <person name="Shimada H."/>
            <person name="Shimada K."/>
            <person name="Silva D."/>
            <person name="Sinclair B."/>
            <person name="Sperling S."/>
            <person name="Stupka E."/>
            <person name="Sugiura K."/>
            <person name="Sultana R."/>
            <person name="Takenaka Y."/>
            <person name="Taki K."/>
            <person name="Tammoja K."/>
            <person name="Tan S.L."/>
            <person name="Tang S."/>
            <person name="Taylor M.S."/>
            <person name="Tegner J."/>
            <person name="Teichmann S.A."/>
            <person name="Ueda H.R."/>
            <person name="van Nimwegen E."/>
            <person name="Verardo R."/>
            <person name="Wei C.L."/>
            <person name="Yagi K."/>
            <person name="Yamanishi H."/>
            <person name="Zabarovsky E."/>
            <person name="Zhu S."/>
            <person name="Zimmer A."/>
            <person name="Hide W."/>
            <person name="Bult C."/>
            <person name="Grimmond S.M."/>
            <person name="Teasdale R.D."/>
            <person name="Liu E.T."/>
            <person name="Brusic V."/>
            <person name="Quackenbush J."/>
            <person name="Wahlestedt C."/>
            <person name="Mattick J.S."/>
            <person name="Hume D.A."/>
            <person name="Kai C."/>
            <person name="Sasaki D."/>
            <person name="Tomaru Y."/>
            <person name="Fukuda S."/>
            <person name="Kanamori-Katayama M."/>
            <person name="Suzuki M."/>
            <person name="Aoki J."/>
            <person name="Arakawa T."/>
            <person name="Iida J."/>
            <person name="Imamura K."/>
            <person name="Itoh M."/>
            <person name="Kato T."/>
            <person name="Kawaji H."/>
            <person name="Kawagashira N."/>
            <person name="Kawashima T."/>
            <person name="Kojima M."/>
            <person name="Kondo S."/>
            <person name="Konno H."/>
            <person name="Nakano K."/>
            <person name="Ninomiya N."/>
            <person name="Nishio T."/>
            <person name="Okada M."/>
            <person name="Plessy C."/>
            <person name="Shibata K."/>
            <person name="Shiraki T."/>
            <person name="Suzuki S."/>
            <person name="Tagami M."/>
            <person name="Waki K."/>
            <person name="Watahiki A."/>
            <person name="Okamura-Oho Y."/>
            <person name="Suzuki H."/>
            <person name="Kawai J."/>
            <person name="Hayashizaki Y."/>
        </authorList>
    </citation>
    <scope>NUCLEOTIDE SEQUENCE [LARGE SCALE MRNA]</scope>
    <source>
        <strain>C57BL/6J</strain>
        <tissue>Head</tissue>
        <tissue>Spinal ganglion</tissue>
        <tissue>Testis</tissue>
    </source>
</reference>
<reference key="3">
    <citation type="journal article" date="2009" name="PLoS Biol.">
        <title>Lineage-specific biology revealed by a finished genome assembly of the mouse.</title>
        <authorList>
            <person name="Church D.M."/>
            <person name="Goodstadt L."/>
            <person name="Hillier L.W."/>
            <person name="Zody M.C."/>
            <person name="Goldstein S."/>
            <person name="She X."/>
            <person name="Bult C.J."/>
            <person name="Agarwala R."/>
            <person name="Cherry J.L."/>
            <person name="DiCuccio M."/>
            <person name="Hlavina W."/>
            <person name="Kapustin Y."/>
            <person name="Meric P."/>
            <person name="Maglott D."/>
            <person name="Birtle Z."/>
            <person name="Marques A.C."/>
            <person name="Graves T."/>
            <person name="Zhou S."/>
            <person name="Teague B."/>
            <person name="Potamousis K."/>
            <person name="Churas C."/>
            <person name="Place M."/>
            <person name="Herschleb J."/>
            <person name="Runnheim R."/>
            <person name="Forrest D."/>
            <person name="Amos-Landgraf J."/>
            <person name="Schwartz D.C."/>
            <person name="Cheng Z."/>
            <person name="Lindblad-Toh K."/>
            <person name="Eichler E.E."/>
            <person name="Ponting C.P."/>
        </authorList>
    </citation>
    <scope>NUCLEOTIDE SEQUENCE [LARGE SCALE GENOMIC DNA]</scope>
    <source>
        <strain>C57BL/6J</strain>
    </source>
</reference>
<reference key="4">
    <citation type="submission" date="2005-09" db="EMBL/GenBank/DDBJ databases">
        <authorList>
            <person name="Mural R.J."/>
            <person name="Adams M.D."/>
            <person name="Myers E.W."/>
            <person name="Smith H.O."/>
            <person name="Venter J.C."/>
        </authorList>
    </citation>
    <scope>NUCLEOTIDE SEQUENCE [LARGE SCALE GENOMIC DNA]</scope>
</reference>
<reference key="5">
    <citation type="journal article" date="2004" name="Genome Res.">
        <title>The status, quality, and expansion of the NIH full-length cDNA project: the Mammalian Gene Collection (MGC).</title>
        <authorList>
            <consortium name="The MGC Project Team"/>
        </authorList>
    </citation>
    <scope>NUCLEOTIDE SEQUENCE [LARGE SCALE MRNA]</scope>
    <source>
        <strain>C57BL/6J</strain>
        <tissue>Brain</tissue>
    </source>
</reference>
<reference key="6">
    <citation type="submission" date="2000-11" db="EMBL/GenBank/DDBJ databases">
        <title>Ten new murine members of the MAGE gene family.</title>
        <authorList>
            <person name="Auquier P.H."/>
            <person name="Chomez P.M."/>
            <person name="De Backer O.R."/>
            <person name="Bertrand M.J.M."/>
        </authorList>
    </citation>
    <scope>NUCLEOTIDE SEQUENCE [MRNA] OF 195-918</scope>
</reference>